<name>ISPH_PECAS</name>
<accession>Q6D0C6</accession>
<organism>
    <name type="scientific">Pectobacterium atrosepticum (strain SCRI 1043 / ATCC BAA-672)</name>
    <name type="common">Erwinia carotovora subsp. atroseptica</name>
    <dbReference type="NCBI Taxonomy" id="218491"/>
    <lineage>
        <taxon>Bacteria</taxon>
        <taxon>Pseudomonadati</taxon>
        <taxon>Pseudomonadota</taxon>
        <taxon>Gammaproteobacteria</taxon>
        <taxon>Enterobacterales</taxon>
        <taxon>Pectobacteriaceae</taxon>
        <taxon>Pectobacterium</taxon>
    </lineage>
</organism>
<reference key="1">
    <citation type="journal article" date="2004" name="Proc. Natl. Acad. Sci. U.S.A.">
        <title>Genome sequence of the enterobacterial phytopathogen Erwinia carotovora subsp. atroseptica and characterization of virulence factors.</title>
        <authorList>
            <person name="Bell K.S."/>
            <person name="Sebaihia M."/>
            <person name="Pritchard L."/>
            <person name="Holden M.T.G."/>
            <person name="Hyman L.J."/>
            <person name="Holeva M.C."/>
            <person name="Thomson N.R."/>
            <person name="Bentley S.D."/>
            <person name="Churcher L.J.C."/>
            <person name="Mungall K."/>
            <person name="Atkin R."/>
            <person name="Bason N."/>
            <person name="Brooks K."/>
            <person name="Chillingworth T."/>
            <person name="Clark K."/>
            <person name="Doggett J."/>
            <person name="Fraser A."/>
            <person name="Hance Z."/>
            <person name="Hauser H."/>
            <person name="Jagels K."/>
            <person name="Moule S."/>
            <person name="Norbertczak H."/>
            <person name="Ormond D."/>
            <person name="Price C."/>
            <person name="Quail M.A."/>
            <person name="Sanders M."/>
            <person name="Walker D."/>
            <person name="Whitehead S."/>
            <person name="Salmond G.P.C."/>
            <person name="Birch P.R.J."/>
            <person name="Parkhill J."/>
            <person name="Toth I.K."/>
        </authorList>
    </citation>
    <scope>NUCLEOTIDE SEQUENCE [LARGE SCALE GENOMIC DNA]</scope>
    <source>
        <strain>SCRI 1043 / ATCC BAA-672</strain>
    </source>
</reference>
<dbReference type="EC" id="1.17.7.4" evidence="1"/>
<dbReference type="EMBL" id="BX950851">
    <property type="protein sequence ID" value="CAG76771.1"/>
    <property type="molecule type" value="Genomic_DNA"/>
</dbReference>
<dbReference type="RefSeq" id="WP_011095371.1">
    <property type="nucleotide sequence ID" value="NC_004547.2"/>
</dbReference>
<dbReference type="SMR" id="Q6D0C6"/>
<dbReference type="STRING" id="218491.ECA3873"/>
<dbReference type="DNASU" id="2881577"/>
<dbReference type="KEGG" id="eca:ECA3873"/>
<dbReference type="PATRIC" id="fig|218491.5.peg.3929"/>
<dbReference type="eggNOG" id="COG0761">
    <property type="taxonomic scope" value="Bacteria"/>
</dbReference>
<dbReference type="HOGENOM" id="CLU_027486_1_0_6"/>
<dbReference type="OrthoDB" id="9804068at2"/>
<dbReference type="UniPathway" id="UPA00056">
    <property type="reaction ID" value="UER00097"/>
</dbReference>
<dbReference type="UniPathway" id="UPA00059">
    <property type="reaction ID" value="UER00105"/>
</dbReference>
<dbReference type="Proteomes" id="UP000007966">
    <property type="component" value="Chromosome"/>
</dbReference>
<dbReference type="GO" id="GO:0051539">
    <property type="term" value="F:4 iron, 4 sulfur cluster binding"/>
    <property type="evidence" value="ECO:0007669"/>
    <property type="project" value="UniProtKB-UniRule"/>
</dbReference>
<dbReference type="GO" id="GO:0051745">
    <property type="term" value="F:4-hydroxy-3-methylbut-2-enyl diphosphate reductase activity"/>
    <property type="evidence" value="ECO:0007669"/>
    <property type="project" value="UniProtKB-UniRule"/>
</dbReference>
<dbReference type="GO" id="GO:0046872">
    <property type="term" value="F:metal ion binding"/>
    <property type="evidence" value="ECO:0007669"/>
    <property type="project" value="UniProtKB-KW"/>
</dbReference>
<dbReference type="GO" id="GO:0050992">
    <property type="term" value="P:dimethylallyl diphosphate biosynthetic process"/>
    <property type="evidence" value="ECO:0007669"/>
    <property type="project" value="UniProtKB-UniRule"/>
</dbReference>
<dbReference type="GO" id="GO:0019288">
    <property type="term" value="P:isopentenyl diphosphate biosynthetic process, methylerythritol 4-phosphate pathway"/>
    <property type="evidence" value="ECO:0007669"/>
    <property type="project" value="UniProtKB-UniRule"/>
</dbReference>
<dbReference type="GO" id="GO:0016114">
    <property type="term" value="P:terpenoid biosynthetic process"/>
    <property type="evidence" value="ECO:0007669"/>
    <property type="project" value="UniProtKB-UniRule"/>
</dbReference>
<dbReference type="CDD" id="cd13944">
    <property type="entry name" value="lytB_ispH"/>
    <property type="match status" value="1"/>
</dbReference>
<dbReference type="FunFam" id="3.40.50.11270:FF:000001">
    <property type="entry name" value="4-hydroxy-3-methylbut-2-enyl diphosphate reductase"/>
    <property type="match status" value="1"/>
</dbReference>
<dbReference type="Gene3D" id="3.40.50.11270">
    <property type="match status" value="1"/>
</dbReference>
<dbReference type="Gene3D" id="3.40.1010.20">
    <property type="entry name" value="4-hydroxy-3-methylbut-2-enyl diphosphate reductase, catalytic domain"/>
    <property type="match status" value="2"/>
</dbReference>
<dbReference type="HAMAP" id="MF_00191">
    <property type="entry name" value="IspH"/>
    <property type="match status" value="1"/>
</dbReference>
<dbReference type="InterPro" id="IPR003451">
    <property type="entry name" value="LytB/IspH"/>
</dbReference>
<dbReference type="NCBIfam" id="TIGR00216">
    <property type="entry name" value="ispH_lytB"/>
    <property type="match status" value="1"/>
</dbReference>
<dbReference type="NCBIfam" id="NF002188">
    <property type="entry name" value="PRK01045.1-2"/>
    <property type="match status" value="1"/>
</dbReference>
<dbReference type="NCBIfam" id="NF002190">
    <property type="entry name" value="PRK01045.1-4"/>
    <property type="match status" value="1"/>
</dbReference>
<dbReference type="PANTHER" id="PTHR30426">
    <property type="entry name" value="4-HYDROXY-3-METHYLBUT-2-ENYL DIPHOSPHATE REDUCTASE"/>
    <property type="match status" value="1"/>
</dbReference>
<dbReference type="PANTHER" id="PTHR30426:SF0">
    <property type="entry name" value="4-HYDROXY-3-METHYLBUT-2-ENYL DIPHOSPHATE REDUCTASE"/>
    <property type="match status" value="1"/>
</dbReference>
<dbReference type="Pfam" id="PF02401">
    <property type="entry name" value="LYTB"/>
    <property type="match status" value="1"/>
</dbReference>
<protein>
    <recommendedName>
        <fullName evidence="1">4-hydroxy-3-methylbut-2-enyl diphosphate reductase</fullName>
        <shortName evidence="1">HMBPP reductase</shortName>
        <ecNumber evidence="1">1.17.7.4</ecNumber>
    </recommendedName>
</protein>
<sequence length="316" mass="34804">MQILLANPRGFCAGVDRAISIVERALELFGTPIYVRHEVVHNRYVVNGLRERGAIFIEQIEDVPDGAILIFSAHGVSQAVRNEAKNRDLTVFDATCPLVTKVHMEVARASKKGVEAILIGHAGHPEVEGTMGQYSNADGGMYLVESPDDVWQLQVKDEKNLCFMTQTTLSVDDTYAVIDALRERFPRIIGPRKDDICYATTNRQEAVRHLSDKADVVFVVGSKNSSNSNRLAELAQRAGKAAYLIDSADDIQESWLTGASYVGVTAGASAPDILVQQVIQRLKELGGKVAVEMQGREENIVFEVPKELRVEVKQID</sequence>
<keyword id="KW-0004">4Fe-4S</keyword>
<keyword id="KW-0408">Iron</keyword>
<keyword id="KW-0411">Iron-sulfur</keyword>
<keyword id="KW-0414">Isoprene biosynthesis</keyword>
<keyword id="KW-0479">Metal-binding</keyword>
<keyword id="KW-0560">Oxidoreductase</keyword>
<keyword id="KW-1185">Reference proteome</keyword>
<feature type="chain" id="PRO_0000128817" description="4-hydroxy-3-methylbut-2-enyl diphosphate reductase">
    <location>
        <begin position="1"/>
        <end position="316"/>
    </location>
</feature>
<feature type="active site" description="Proton donor" evidence="1">
    <location>
        <position position="126"/>
    </location>
</feature>
<feature type="binding site" evidence="1">
    <location>
        <position position="12"/>
    </location>
    <ligand>
        <name>[4Fe-4S] cluster</name>
        <dbReference type="ChEBI" id="CHEBI:49883"/>
    </ligand>
</feature>
<feature type="binding site" evidence="1">
    <location>
        <position position="41"/>
    </location>
    <ligand>
        <name>(2E)-4-hydroxy-3-methylbut-2-enyl diphosphate</name>
        <dbReference type="ChEBI" id="CHEBI:128753"/>
    </ligand>
</feature>
<feature type="binding site" evidence="1">
    <location>
        <position position="41"/>
    </location>
    <ligand>
        <name>dimethylallyl diphosphate</name>
        <dbReference type="ChEBI" id="CHEBI:57623"/>
    </ligand>
</feature>
<feature type="binding site" evidence="1">
    <location>
        <position position="41"/>
    </location>
    <ligand>
        <name>isopentenyl diphosphate</name>
        <dbReference type="ChEBI" id="CHEBI:128769"/>
    </ligand>
</feature>
<feature type="binding site" evidence="1">
    <location>
        <position position="74"/>
    </location>
    <ligand>
        <name>(2E)-4-hydroxy-3-methylbut-2-enyl diphosphate</name>
        <dbReference type="ChEBI" id="CHEBI:128753"/>
    </ligand>
</feature>
<feature type="binding site" evidence="1">
    <location>
        <position position="74"/>
    </location>
    <ligand>
        <name>dimethylallyl diphosphate</name>
        <dbReference type="ChEBI" id="CHEBI:57623"/>
    </ligand>
</feature>
<feature type="binding site" evidence="1">
    <location>
        <position position="74"/>
    </location>
    <ligand>
        <name>isopentenyl diphosphate</name>
        <dbReference type="ChEBI" id="CHEBI:128769"/>
    </ligand>
</feature>
<feature type="binding site" evidence="1">
    <location>
        <position position="96"/>
    </location>
    <ligand>
        <name>[4Fe-4S] cluster</name>
        <dbReference type="ChEBI" id="CHEBI:49883"/>
    </ligand>
</feature>
<feature type="binding site" evidence="1">
    <location>
        <position position="124"/>
    </location>
    <ligand>
        <name>(2E)-4-hydroxy-3-methylbut-2-enyl diphosphate</name>
        <dbReference type="ChEBI" id="CHEBI:128753"/>
    </ligand>
</feature>
<feature type="binding site" evidence="1">
    <location>
        <position position="124"/>
    </location>
    <ligand>
        <name>dimethylallyl diphosphate</name>
        <dbReference type="ChEBI" id="CHEBI:57623"/>
    </ligand>
</feature>
<feature type="binding site" evidence="1">
    <location>
        <position position="124"/>
    </location>
    <ligand>
        <name>isopentenyl diphosphate</name>
        <dbReference type="ChEBI" id="CHEBI:128769"/>
    </ligand>
</feature>
<feature type="binding site" evidence="1">
    <location>
        <position position="167"/>
    </location>
    <ligand>
        <name>(2E)-4-hydroxy-3-methylbut-2-enyl diphosphate</name>
        <dbReference type="ChEBI" id="CHEBI:128753"/>
    </ligand>
</feature>
<feature type="binding site" evidence="1">
    <location>
        <position position="197"/>
    </location>
    <ligand>
        <name>[4Fe-4S] cluster</name>
        <dbReference type="ChEBI" id="CHEBI:49883"/>
    </ligand>
</feature>
<feature type="binding site" evidence="1">
    <location>
        <position position="225"/>
    </location>
    <ligand>
        <name>(2E)-4-hydroxy-3-methylbut-2-enyl diphosphate</name>
        <dbReference type="ChEBI" id="CHEBI:128753"/>
    </ligand>
</feature>
<feature type="binding site" evidence="1">
    <location>
        <position position="225"/>
    </location>
    <ligand>
        <name>dimethylallyl diphosphate</name>
        <dbReference type="ChEBI" id="CHEBI:57623"/>
    </ligand>
</feature>
<feature type="binding site" evidence="1">
    <location>
        <position position="225"/>
    </location>
    <ligand>
        <name>isopentenyl diphosphate</name>
        <dbReference type="ChEBI" id="CHEBI:128769"/>
    </ligand>
</feature>
<feature type="binding site" evidence="1">
    <location>
        <position position="226"/>
    </location>
    <ligand>
        <name>(2E)-4-hydroxy-3-methylbut-2-enyl diphosphate</name>
        <dbReference type="ChEBI" id="CHEBI:128753"/>
    </ligand>
</feature>
<feature type="binding site" evidence="1">
    <location>
        <position position="226"/>
    </location>
    <ligand>
        <name>dimethylallyl diphosphate</name>
        <dbReference type="ChEBI" id="CHEBI:57623"/>
    </ligand>
</feature>
<feature type="binding site" evidence="1">
    <location>
        <position position="226"/>
    </location>
    <ligand>
        <name>isopentenyl diphosphate</name>
        <dbReference type="ChEBI" id="CHEBI:128769"/>
    </ligand>
</feature>
<feature type="binding site" evidence="1">
    <location>
        <position position="227"/>
    </location>
    <ligand>
        <name>(2E)-4-hydroxy-3-methylbut-2-enyl diphosphate</name>
        <dbReference type="ChEBI" id="CHEBI:128753"/>
    </ligand>
</feature>
<feature type="binding site" evidence="1">
    <location>
        <position position="227"/>
    </location>
    <ligand>
        <name>dimethylallyl diphosphate</name>
        <dbReference type="ChEBI" id="CHEBI:57623"/>
    </ligand>
</feature>
<feature type="binding site" evidence="1">
    <location>
        <position position="227"/>
    </location>
    <ligand>
        <name>isopentenyl diphosphate</name>
        <dbReference type="ChEBI" id="CHEBI:128769"/>
    </ligand>
</feature>
<feature type="binding site" evidence="1">
    <location>
        <position position="269"/>
    </location>
    <ligand>
        <name>(2E)-4-hydroxy-3-methylbut-2-enyl diphosphate</name>
        <dbReference type="ChEBI" id="CHEBI:128753"/>
    </ligand>
</feature>
<feature type="binding site" evidence="1">
    <location>
        <position position="269"/>
    </location>
    <ligand>
        <name>dimethylallyl diphosphate</name>
        <dbReference type="ChEBI" id="CHEBI:57623"/>
    </ligand>
</feature>
<feature type="binding site" evidence="1">
    <location>
        <position position="269"/>
    </location>
    <ligand>
        <name>isopentenyl diphosphate</name>
        <dbReference type="ChEBI" id="CHEBI:128769"/>
    </ligand>
</feature>
<evidence type="ECO:0000255" key="1">
    <source>
        <dbReference type="HAMAP-Rule" id="MF_00191"/>
    </source>
</evidence>
<proteinExistence type="inferred from homology"/>
<comment type="function">
    <text evidence="1">Catalyzes the conversion of 1-hydroxy-2-methyl-2-(E)-butenyl 4-diphosphate (HMBPP) into a mixture of isopentenyl diphosphate (IPP) and dimethylallyl diphosphate (DMAPP). Acts in the terminal step of the DOXP/MEP pathway for isoprenoid precursor biosynthesis.</text>
</comment>
<comment type="catalytic activity">
    <reaction evidence="1">
        <text>isopentenyl diphosphate + 2 oxidized [2Fe-2S]-[ferredoxin] + H2O = (2E)-4-hydroxy-3-methylbut-2-enyl diphosphate + 2 reduced [2Fe-2S]-[ferredoxin] + 2 H(+)</text>
        <dbReference type="Rhea" id="RHEA:24488"/>
        <dbReference type="Rhea" id="RHEA-COMP:10000"/>
        <dbReference type="Rhea" id="RHEA-COMP:10001"/>
        <dbReference type="ChEBI" id="CHEBI:15377"/>
        <dbReference type="ChEBI" id="CHEBI:15378"/>
        <dbReference type="ChEBI" id="CHEBI:33737"/>
        <dbReference type="ChEBI" id="CHEBI:33738"/>
        <dbReference type="ChEBI" id="CHEBI:128753"/>
        <dbReference type="ChEBI" id="CHEBI:128769"/>
        <dbReference type="EC" id="1.17.7.4"/>
    </reaction>
</comment>
<comment type="catalytic activity">
    <reaction evidence="1">
        <text>dimethylallyl diphosphate + 2 oxidized [2Fe-2S]-[ferredoxin] + H2O = (2E)-4-hydroxy-3-methylbut-2-enyl diphosphate + 2 reduced [2Fe-2S]-[ferredoxin] + 2 H(+)</text>
        <dbReference type="Rhea" id="RHEA:24825"/>
        <dbReference type="Rhea" id="RHEA-COMP:10000"/>
        <dbReference type="Rhea" id="RHEA-COMP:10001"/>
        <dbReference type="ChEBI" id="CHEBI:15377"/>
        <dbReference type="ChEBI" id="CHEBI:15378"/>
        <dbReference type="ChEBI" id="CHEBI:33737"/>
        <dbReference type="ChEBI" id="CHEBI:33738"/>
        <dbReference type="ChEBI" id="CHEBI:57623"/>
        <dbReference type="ChEBI" id="CHEBI:128753"/>
        <dbReference type="EC" id="1.17.7.4"/>
    </reaction>
</comment>
<comment type="cofactor">
    <cofactor evidence="1">
        <name>[4Fe-4S] cluster</name>
        <dbReference type="ChEBI" id="CHEBI:49883"/>
    </cofactor>
    <text evidence="1">Binds 1 [4Fe-4S] cluster per subunit.</text>
</comment>
<comment type="pathway">
    <text evidence="1">Isoprenoid biosynthesis; dimethylallyl diphosphate biosynthesis; dimethylallyl diphosphate from (2E)-4-hydroxy-3-methylbutenyl diphosphate: step 1/1.</text>
</comment>
<comment type="pathway">
    <text evidence="1">Isoprenoid biosynthesis; isopentenyl diphosphate biosynthesis via DXP pathway; isopentenyl diphosphate from 1-deoxy-D-xylulose 5-phosphate: step 6/6.</text>
</comment>
<comment type="subunit">
    <text evidence="1">Homodimer.</text>
</comment>
<comment type="similarity">
    <text evidence="1">Belongs to the IspH family.</text>
</comment>
<gene>
    <name evidence="1" type="primary">ispH</name>
    <name type="synonym">lytB</name>
    <name type="ordered locus">ECA3873</name>
</gene>